<evidence type="ECO:0000250" key="1"/>
<evidence type="ECO:0000255" key="2">
    <source>
        <dbReference type="HAMAP-Rule" id="MF_00436"/>
    </source>
</evidence>
<evidence type="ECO:0000255" key="3">
    <source>
        <dbReference type="PROSITE-ProRule" id="PRU01346"/>
    </source>
</evidence>
<evidence type="ECO:0000256" key="4">
    <source>
        <dbReference type="SAM" id="MobiDB-lite"/>
    </source>
</evidence>
<comment type="function">
    <text evidence="2">RNA chaperone that binds small regulatory RNA (sRNAs) and mRNAs to facilitate mRNA translational regulation in response to envelope stress, environmental stress and changes in metabolite concentrations. Also binds with high specificity to tRNAs.</text>
</comment>
<comment type="subunit">
    <text evidence="2">Homohexamer.</text>
</comment>
<comment type="similarity">
    <text evidence="2">Belongs to the Hfq family.</text>
</comment>
<feature type="initiator methionine" description="Removed" evidence="1">
    <location>
        <position position="1"/>
    </location>
</feature>
<feature type="chain" id="PRO_0000095655" description="RNA-binding protein Hfq">
    <location>
        <begin position="2"/>
        <end position="96"/>
    </location>
</feature>
<feature type="domain" description="Sm" evidence="3">
    <location>
        <begin position="9"/>
        <end position="68"/>
    </location>
</feature>
<feature type="region of interest" description="Disordered" evidence="4">
    <location>
        <begin position="67"/>
        <end position="96"/>
    </location>
</feature>
<feature type="compositionally biased region" description="Low complexity" evidence="4">
    <location>
        <begin position="72"/>
        <end position="87"/>
    </location>
</feature>
<organism>
    <name type="scientific">Pasteurella multocida (strain Pm70)</name>
    <dbReference type="NCBI Taxonomy" id="272843"/>
    <lineage>
        <taxon>Bacteria</taxon>
        <taxon>Pseudomonadati</taxon>
        <taxon>Pseudomonadota</taxon>
        <taxon>Gammaproteobacteria</taxon>
        <taxon>Pasteurellales</taxon>
        <taxon>Pasteurellaceae</taxon>
        <taxon>Pasteurella</taxon>
    </lineage>
</organism>
<accession>Q9CMC6</accession>
<reference key="1">
    <citation type="journal article" date="2001" name="Proc. Natl. Acad. Sci. U.S.A.">
        <title>Complete genomic sequence of Pasteurella multocida Pm70.</title>
        <authorList>
            <person name="May B.J."/>
            <person name="Zhang Q."/>
            <person name="Li L.L."/>
            <person name="Paustian M.L."/>
            <person name="Whittam T.S."/>
            <person name="Kapur V."/>
        </authorList>
    </citation>
    <scope>NUCLEOTIDE SEQUENCE [LARGE SCALE GENOMIC DNA]</scope>
    <source>
        <strain>Pm70</strain>
    </source>
</reference>
<sequence>MAKGQSLQDPYLNALRRERIPVSIYLVNGIKLQGQIESFDQFVILLKNTVNQMVYKHAISTVVPARSVSHHNNSNNSNQQNYQQEQQTDSNVEKAE</sequence>
<gene>
    <name evidence="2" type="primary">hfq</name>
    <name type="ordered locus">PM0906</name>
</gene>
<dbReference type="EMBL" id="AE004439">
    <property type="protein sequence ID" value="AAK02990.1"/>
    <property type="molecule type" value="Genomic_DNA"/>
</dbReference>
<dbReference type="RefSeq" id="WP_005716974.1">
    <property type="nucleotide sequence ID" value="NC_002663.1"/>
</dbReference>
<dbReference type="SMR" id="Q9CMC6"/>
<dbReference type="STRING" id="272843.PM0906"/>
<dbReference type="EnsemblBacteria" id="AAK02990">
    <property type="protein sequence ID" value="AAK02990"/>
    <property type="gene ID" value="PM0906"/>
</dbReference>
<dbReference type="GeneID" id="77207664"/>
<dbReference type="KEGG" id="pmu:PM0906"/>
<dbReference type="HOGENOM" id="CLU_113688_2_2_6"/>
<dbReference type="OrthoDB" id="9799751at2"/>
<dbReference type="Proteomes" id="UP000000809">
    <property type="component" value="Chromosome"/>
</dbReference>
<dbReference type="GO" id="GO:0005829">
    <property type="term" value="C:cytosol"/>
    <property type="evidence" value="ECO:0007669"/>
    <property type="project" value="TreeGrafter"/>
</dbReference>
<dbReference type="GO" id="GO:0003723">
    <property type="term" value="F:RNA binding"/>
    <property type="evidence" value="ECO:0007669"/>
    <property type="project" value="UniProtKB-UniRule"/>
</dbReference>
<dbReference type="GO" id="GO:0006355">
    <property type="term" value="P:regulation of DNA-templated transcription"/>
    <property type="evidence" value="ECO:0007669"/>
    <property type="project" value="InterPro"/>
</dbReference>
<dbReference type="GO" id="GO:0043487">
    <property type="term" value="P:regulation of RNA stability"/>
    <property type="evidence" value="ECO:0007669"/>
    <property type="project" value="TreeGrafter"/>
</dbReference>
<dbReference type="GO" id="GO:0045974">
    <property type="term" value="P:regulation of translation, ncRNA-mediated"/>
    <property type="evidence" value="ECO:0007669"/>
    <property type="project" value="TreeGrafter"/>
</dbReference>
<dbReference type="CDD" id="cd01716">
    <property type="entry name" value="Hfq"/>
    <property type="match status" value="1"/>
</dbReference>
<dbReference type="FunFam" id="2.30.30.100:FF:000001">
    <property type="entry name" value="RNA-binding protein Hfq"/>
    <property type="match status" value="1"/>
</dbReference>
<dbReference type="Gene3D" id="2.30.30.100">
    <property type="match status" value="1"/>
</dbReference>
<dbReference type="HAMAP" id="MF_00436">
    <property type="entry name" value="Hfq"/>
    <property type="match status" value="1"/>
</dbReference>
<dbReference type="InterPro" id="IPR005001">
    <property type="entry name" value="Hfq"/>
</dbReference>
<dbReference type="InterPro" id="IPR010920">
    <property type="entry name" value="LSM_dom_sf"/>
</dbReference>
<dbReference type="InterPro" id="IPR047575">
    <property type="entry name" value="Sm"/>
</dbReference>
<dbReference type="NCBIfam" id="TIGR02383">
    <property type="entry name" value="Hfq"/>
    <property type="match status" value="1"/>
</dbReference>
<dbReference type="NCBIfam" id="NF001602">
    <property type="entry name" value="PRK00395.1"/>
    <property type="match status" value="1"/>
</dbReference>
<dbReference type="PANTHER" id="PTHR34772">
    <property type="entry name" value="RNA-BINDING PROTEIN HFQ"/>
    <property type="match status" value="1"/>
</dbReference>
<dbReference type="PANTHER" id="PTHR34772:SF1">
    <property type="entry name" value="RNA-BINDING PROTEIN HFQ"/>
    <property type="match status" value="1"/>
</dbReference>
<dbReference type="Pfam" id="PF17209">
    <property type="entry name" value="Hfq"/>
    <property type="match status" value="1"/>
</dbReference>
<dbReference type="SUPFAM" id="SSF50182">
    <property type="entry name" value="Sm-like ribonucleoproteins"/>
    <property type="match status" value="1"/>
</dbReference>
<dbReference type="PROSITE" id="PS52002">
    <property type="entry name" value="SM"/>
    <property type="match status" value="1"/>
</dbReference>
<name>HFQ_PASMU</name>
<keyword id="KW-1185">Reference proteome</keyword>
<keyword id="KW-0694">RNA-binding</keyword>
<keyword id="KW-0346">Stress response</keyword>
<proteinExistence type="inferred from homology"/>
<protein>
    <recommendedName>
        <fullName evidence="2">RNA-binding protein Hfq</fullName>
    </recommendedName>
</protein>